<reference key="1">
    <citation type="submission" date="1995-10" db="EMBL/GenBank/DDBJ databases">
        <authorList>
            <person name="Delius H."/>
        </authorList>
    </citation>
    <scope>NUCLEOTIDE SEQUENCE [GENOMIC DNA]</scope>
</reference>
<reference key="2">
    <citation type="journal article" date="1995" name="J. Virol.">
        <title>Analysis of genomic sequences of 95 papillomavirus types: uniting typing, phylogeny, and taxonomy.</title>
        <authorList>
            <person name="Chan S.-Y."/>
            <person name="Delius H."/>
            <person name="Halpern A.L."/>
            <person name="Bernard H.U."/>
        </authorList>
    </citation>
    <scope>NUCLEOTIDE SEQUENCE [GENOMIC DNA] OF 379-474</scope>
</reference>
<organismHost>
    <name type="scientific">Homo sapiens</name>
    <name type="common">Human</name>
    <dbReference type="NCBI Taxonomy" id="9606"/>
</organismHost>
<gene>
    <name evidence="1" type="primary">L1</name>
</gene>
<name>VL1_HPV20</name>
<keyword id="KW-0167">Capsid protein</keyword>
<keyword id="KW-1015">Disulfide bond</keyword>
<keyword id="KW-1048">Host nucleus</keyword>
<keyword id="KW-0945">Host-virus interaction</keyword>
<keyword id="KW-0426">Late protein</keyword>
<keyword id="KW-1145">T=7 icosahedral capsid protein</keyword>
<keyword id="KW-1161">Viral attachment to host cell</keyword>
<keyword id="KW-1162">Viral penetration into host cytoplasm</keyword>
<keyword id="KW-0946">Virion</keyword>
<keyword id="KW-1164">Virus endocytosis by host</keyword>
<keyword id="KW-1160">Virus entry into host cell</keyword>
<feature type="chain" id="PRO_0000133504" description="Major capsid protein L1">
    <location>
        <begin position="1"/>
        <end position="516"/>
    </location>
</feature>
<feature type="disulfide bond" description="Interchain (with C-444)" evidence="1">
    <location>
        <position position="175"/>
    </location>
</feature>
<feature type="disulfide bond" description="Interchain (with C-175)" evidence="1">
    <location>
        <position position="444"/>
    </location>
</feature>
<proteinExistence type="inferred from homology"/>
<evidence type="ECO:0000255" key="1">
    <source>
        <dbReference type="HAMAP-Rule" id="MF_04002"/>
    </source>
</evidence>
<organism>
    <name type="scientific">Human papillomavirus 20</name>
    <dbReference type="NCBI Taxonomy" id="31547"/>
    <lineage>
        <taxon>Viruses</taxon>
        <taxon>Monodnaviria</taxon>
        <taxon>Shotokuvirae</taxon>
        <taxon>Cossaviricota</taxon>
        <taxon>Papovaviricetes</taxon>
        <taxon>Zurhausenvirales</taxon>
        <taxon>Papillomaviridae</taxon>
        <taxon>Firstpapillomavirinae</taxon>
        <taxon>Betapapillomavirus</taxon>
        <taxon>Betapapillomavirus 1</taxon>
    </lineage>
</organism>
<accession>P50786</accession>
<sequence length="516" mass="58434">MAVWQAASGKVYLPPSTPVARVQSTDEYVQRTNIYYHAYSDRLLTVGHPYFNIYDIQGTKIKVPKVSGNQHRVFRLKLPDPNRFALADMSVYNPDKERLVWGCRGIEIGRGQPLGVGSVGHPLFNKLGDTENPNSYKGNSTDDRQNVSFDPKQLQMFIIGCAPCLGEHWDRALPCADDVPNPGSCPPIELKNTAIQDGDMADIGYGNLNFKALQENRADVSLDIVNETCKYPDFLKMQNDVYGDSCFFYARREQCYARHFFVRGGKTGDDIPAGQIDEGSMKNAFYIPPVNNQAQNNLGNSMYFPTVSGSLVSSDAQLFNRPFWLQRAQGHNNGICWFNQLFVTVVDNTRNTNFSISVHSENTDVSKIQNYDSQKFQEYLRHVEEYEISLILQLCKVPLTAEVLAQINAMNSNILEEWQLGFVPAPDNPIHDTYRYINSAATRCPDKNPPKEREDPYKDLNFWNVDLSERLSLELDQYSLGRKFLFQAGLQQATVNGTKTVSSKLSTRGVKRKRKQ</sequence>
<dbReference type="EMBL" id="U31778">
    <property type="protein sequence ID" value="AAA79393.1"/>
    <property type="molecule type" value="Genomic_DNA"/>
</dbReference>
<dbReference type="EMBL" id="U21865">
    <property type="protein sequence ID" value="AAA92828.1"/>
    <property type="molecule type" value="Genomic_DNA"/>
</dbReference>
<dbReference type="SMR" id="P50786"/>
<dbReference type="Proteomes" id="UP000008230">
    <property type="component" value="Genome"/>
</dbReference>
<dbReference type="GO" id="GO:0042025">
    <property type="term" value="C:host cell nucleus"/>
    <property type="evidence" value="ECO:0007669"/>
    <property type="project" value="UniProtKB-SubCell"/>
</dbReference>
<dbReference type="GO" id="GO:0039620">
    <property type="term" value="C:T=7 icosahedral viral capsid"/>
    <property type="evidence" value="ECO:0007669"/>
    <property type="project" value="UniProtKB-UniRule"/>
</dbReference>
<dbReference type="GO" id="GO:0005198">
    <property type="term" value="F:structural molecule activity"/>
    <property type="evidence" value="ECO:0007669"/>
    <property type="project" value="UniProtKB-UniRule"/>
</dbReference>
<dbReference type="GO" id="GO:0075509">
    <property type="term" value="P:endocytosis involved in viral entry into host cell"/>
    <property type="evidence" value="ECO:0007669"/>
    <property type="project" value="UniProtKB-KW"/>
</dbReference>
<dbReference type="GO" id="GO:0019062">
    <property type="term" value="P:virion attachment to host cell"/>
    <property type="evidence" value="ECO:0007669"/>
    <property type="project" value="UniProtKB-UniRule"/>
</dbReference>
<dbReference type="Gene3D" id="2.60.175.20">
    <property type="entry name" value="Major capsid L1 (late) superfamily, Papillomavirus"/>
    <property type="match status" value="2"/>
</dbReference>
<dbReference type="HAMAP" id="MF_04002">
    <property type="entry name" value="PPV_L1"/>
    <property type="match status" value="1"/>
</dbReference>
<dbReference type="InterPro" id="IPR002210">
    <property type="entry name" value="Capsid_L1_Papillomavir"/>
</dbReference>
<dbReference type="InterPro" id="IPR036973">
    <property type="entry name" value="Capsid_L1_sf_Papillomavir"/>
</dbReference>
<dbReference type="InterPro" id="IPR011222">
    <property type="entry name" value="dsDNA_vir_gr_I_capsid"/>
</dbReference>
<dbReference type="Pfam" id="PF00500">
    <property type="entry name" value="Late_protein_L1"/>
    <property type="match status" value="1"/>
</dbReference>
<dbReference type="PRINTS" id="PR00865">
    <property type="entry name" value="HPVCAPSIDL1"/>
</dbReference>
<dbReference type="SUPFAM" id="SSF88648">
    <property type="entry name" value="Group I dsDNA viruses"/>
    <property type="match status" value="1"/>
</dbReference>
<protein>
    <recommendedName>
        <fullName evidence="1">Major capsid protein L1</fullName>
    </recommendedName>
</protein>
<comment type="function">
    <text evidence="1">Forms an icosahedral capsid with a T=7 symmetry and a 50 nm diameter. The capsid is composed of 72 pentamers linked to each other by disulfide bonds and associated with L2 proteins. Binds to heparan sulfate proteoglycans on cell surface of basal layer keratinocytes to provide initial virion attachment. This binding mediates a conformational change in the virus capsid that facilitates efficient infection. The virion enters the host cell via endocytosis. During virus trafficking, L1 protein dissociates from the viral DNA and the genomic DNA is released to the host nucleus. The virion assembly takes place within the cell nucleus. Encapsulates the genomic DNA together with protein L2.</text>
</comment>
<comment type="subunit">
    <text evidence="1">Self-assembles into homopentamers. The capsid has an icosahedral symmetry and consists of 72 capsomers, with each capsomer being a pentamer of L1. Interacts with the minor capsid protein L2; this interaction is necessary for viral genome encapsidation. Interacts with protein E2; this interaction enhances E2-dependent replication and transcription activation.</text>
</comment>
<comment type="subcellular location">
    <subcellularLocation>
        <location evidence="1">Virion</location>
    </subcellularLocation>
    <subcellularLocation>
        <location evidence="1">Host nucleus</location>
    </subcellularLocation>
</comment>
<comment type="similarity">
    <text evidence="1">Belongs to the papillomaviridae L1 protein family.</text>
</comment>